<evidence type="ECO:0000250" key="1"/>
<evidence type="ECO:0000305" key="2"/>
<feature type="chain" id="PRO_0000164427" description="Cell wall hydrolase CwlJ">
    <location>
        <begin position="1"/>
        <end position="141"/>
    </location>
</feature>
<comment type="function">
    <text evidence="1">Probable spore cortex-lytic enzyme involved in the depolymerization of cortex peptidoglycan during germination.</text>
</comment>
<comment type="subcellular location">
    <subcellularLocation>
        <location evidence="2">Secreted</location>
    </subcellularLocation>
</comment>
<comment type="similarity">
    <text evidence="2">Belongs to the CwlJ family.</text>
</comment>
<organism>
    <name type="scientific">Oceanobacillus iheyensis (strain DSM 14371 / CIP 107618 / JCM 11309 / KCTC 3954 / HTE831)</name>
    <dbReference type="NCBI Taxonomy" id="221109"/>
    <lineage>
        <taxon>Bacteria</taxon>
        <taxon>Bacillati</taxon>
        <taxon>Bacillota</taxon>
        <taxon>Bacilli</taxon>
        <taxon>Bacillales</taxon>
        <taxon>Bacillaceae</taxon>
        <taxon>Oceanobacillus</taxon>
    </lineage>
</organism>
<gene>
    <name type="primary">cwlJ</name>
    <name type="ordered locus">OB3024</name>
</gene>
<proteinExistence type="inferred from homology"/>
<keyword id="KW-0961">Cell wall biogenesis/degradation</keyword>
<keyword id="KW-0309">Germination</keyword>
<keyword id="KW-0378">Hydrolase</keyword>
<keyword id="KW-1185">Reference proteome</keyword>
<keyword id="KW-0964">Secreted</keyword>
<keyword id="KW-0749">Sporulation</keyword>
<name>CWLJ_OCEIH</name>
<accession>P59104</accession>
<protein>
    <recommendedName>
        <fullName>Cell wall hydrolase CwlJ</fullName>
    </recommendedName>
</protein>
<sequence>MAVVKHNEAEVELLARLMRAEAEGDGDLGMLMVGNTGINRVIASCLDFPNIRTITNMVYQSPGGFEATQKGYFYQRARQSEIRLARRVIQGERQHPASNSLWFFMPEGACPEQWYGQWNVGRYKAHCFYAPTAADCPEVFR</sequence>
<dbReference type="EMBL" id="BA000028">
    <property type="protein sequence ID" value="BAC14980.1"/>
    <property type="molecule type" value="Genomic_DNA"/>
</dbReference>
<dbReference type="RefSeq" id="WP_011067420.1">
    <property type="nucleotide sequence ID" value="NC_004193.1"/>
</dbReference>
<dbReference type="SMR" id="P59104"/>
<dbReference type="STRING" id="221109.gene:10735276"/>
<dbReference type="KEGG" id="oih:OB3024"/>
<dbReference type="eggNOG" id="COG3773">
    <property type="taxonomic scope" value="Bacteria"/>
</dbReference>
<dbReference type="HOGENOM" id="CLU_148732_0_0_9"/>
<dbReference type="OrthoDB" id="1642705at2"/>
<dbReference type="Proteomes" id="UP000000822">
    <property type="component" value="Chromosome"/>
</dbReference>
<dbReference type="GO" id="GO:0005576">
    <property type="term" value="C:extracellular region"/>
    <property type="evidence" value="ECO:0007669"/>
    <property type="project" value="UniProtKB-SubCell"/>
</dbReference>
<dbReference type="GO" id="GO:0016787">
    <property type="term" value="F:hydrolase activity"/>
    <property type="evidence" value="ECO:0007669"/>
    <property type="project" value="UniProtKB-KW"/>
</dbReference>
<dbReference type="GO" id="GO:0071555">
    <property type="term" value="P:cell wall organization"/>
    <property type="evidence" value="ECO:0007669"/>
    <property type="project" value="UniProtKB-KW"/>
</dbReference>
<dbReference type="GO" id="GO:0030435">
    <property type="term" value="P:sporulation resulting in formation of a cellular spore"/>
    <property type="evidence" value="ECO:0007669"/>
    <property type="project" value="UniProtKB-KW"/>
</dbReference>
<dbReference type="Gene3D" id="1.10.10.2520">
    <property type="entry name" value="Cell wall hydrolase SleB, domain 1"/>
    <property type="match status" value="1"/>
</dbReference>
<dbReference type="InterPro" id="IPR011105">
    <property type="entry name" value="Cell_wall_hydrolase_SleB"/>
</dbReference>
<dbReference type="InterPro" id="IPR042047">
    <property type="entry name" value="SleB_dom1"/>
</dbReference>
<dbReference type="Pfam" id="PF07486">
    <property type="entry name" value="Hydrolase_2"/>
    <property type="match status" value="1"/>
</dbReference>
<reference key="1">
    <citation type="journal article" date="2002" name="Nucleic Acids Res.">
        <title>Genome sequence of Oceanobacillus iheyensis isolated from the Iheya Ridge and its unexpected adaptive capabilities to extreme environments.</title>
        <authorList>
            <person name="Takami H."/>
            <person name="Takaki Y."/>
            <person name="Uchiyama I."/>
        </authorList>
    </citation>
    <scope>NUCLEOTIDE SEQUENCE [LARGE SCALE GENOMIC DNA]</scope>
    <source>
        <strain>DSM 14371 / CIP 107618 / JCM 11309 / KCTC 3954 / HTE831</strain>
    </source>
</reference>